<reference key="1">
    <citation type="journal article" date="2007" name="Science">
        <title>Legumes symbioses: absence of nod genes in photosynthetic bradyrhizobia.</title>
        <authorList>
            <person name="Giraud E."/>
            <person name="Moulin L."/>
            <person name="Vallenet D."/>
            <person name="Barbe V."/>
            <person name="Cytryn E."/>
            <person name="Avarre J.-C."/>
            <person name="Jaubert M."/>
            <person name="Simon D."/>
            <person name="Cartieaux F."/>
            <person name="Prin Y."/>
            <person name="Bena G."/>
            <person name="Hannibal L."/>
            <person name="Fardoux J."/>
            <person name="Kojadinovic M."/>
            <person name="Vuillet L."/>
            <person name="Lajus A."/>
            <person name="Cruveiller S."/>
            <person name="Rouy Z."/>
            <person name="Mangenot S."/>
            <person name="Segurens B."/>
            <person name="Dossat C."/>
            <person name="Franck W.L."/>
            <person name="Chang W.-S."/>
            <person name="Saunders E."/>
            <person name="Bruce D."/>
            <person name="Richardson P."/>
            <person name="Normand P."/>
            <person name="Dreyfus B."/>
            <person name="Pignol D."/>
            <person name="Stacey G."/>
            <person name="Emerich D."/>
            <person name="Vermeglio A."/>
            <person name="Medigue C."/>
            <person name="Sadowsky M."/>
        </authorList>
    </citation>
    <scope>NUCLEOTIDE SEQUENCE [LARGE SCALE GENOMIC DNA]</scope>
    <source>
        <strain>BTAi1 / ATCC BAA-1182</strain>
    </source>
</reference>
<keyword id="KW-0077">Bacteriochlorophyll biosynthesis</keyword>
<keyword id="KW-0149">Chlorophyll biosynthesis</keyword>
<keyword id="KW-0408">Iron</keyword>
<keyword id="KW-0479">Metal-binding</keyword>
<keyword id="KW-0521">NADP</keyword>
<keyword id="KW-0560">Oxidoreductase</keyword>
<keyword id="KW-0602">Photosynthesis</keyword>
<keyword id="KW-1185">Reference proteome</keyword>
<organism>
    <name type="scientific">Bradyrhizobium sp. (strain BTAi1 / ATCC BAA-1182)</name>
    <dbReference type="NCBI Taxonomy" id="288000"/>
    <lineage>
        <taxon>Bacteria</taxon>
        <taxon>Pseudomonadati</taxon>
        <taxon>Pseudomonadota</taxon>
        <taxon>Alphaproteobacteria</taxon>
        <taxon>Hyphomicrobiales</taxon>
        <taxon>Nitrobacteraceae</taxon>
        <taxon>Bradyrhizobium</taxon>
    </lineage>
</organism>
<evidence type="ECO:0000255" key="1">
    <source>
        <dbReference type="HAMAP-Rule" id="MF_01840"/>
    </source>
</evidence>
<gene>
    <name evidence="1" type="primary">acsF</name>
    <name type="ordered locus">BBta_6407</name>
</gene>
<accession>A5EQ73</accession>
<protein>
    <recommendedName>
        <fullName evidence="1">Aerobic magnesium-protoporphyrin IX monomethyl ester [oxidative] cyclase</fullName>
        <shortName evidence="1">Aerobic Mg-protoporphyrin IX monomethyl ester oxidative cyclase</shortName>
        <ecNumber evidence="1">1.14.13.81</ecNumber>
    </recommendedName>
</protein>
<sequence length="353" mass="41246">MIAMEGGAGNISTKMALEDTILTPRFYTTDFAAMDRLNVDLVRREWDAVMAELRADHNRKHFVRTPEFEKDLNELPEALRLEFKDFLVSSLTAEFSGCVLYAEIKKRITNPDIRELFSYMSRDEARHAGFINEILKDHGIGVDLGFLTKVKKYTYFKPKFIFYATYLSEKIGYARYITIYRQMERHPERQFHPIFKWFERWCNDEFRHGEAFALLMRADPKLLSGLNKLWIKFFLLAVFATMHVRDHMRPAFYEALGMPVDEYDMRVFRITSEISRQVFPVMLDIDNPRFWAGLNQLRKVSEAIADAKAQGGVMGAIKRAVLPLKAALTFGRLYMLPAKSNELPREIRLQPAW</sequence>
<feature type="chain" id="PRO_1000070543" description="Aerobic magnesium-protoporphyrin IX monomethyl ester [oxidative] cyclase">
    <location>
        <begin position="1"/>
        <end position="353"/>
    </location>
</feature>
<proteinExistence type="inferred from homology"/>
<dbReference type="EC" id="1.14.13.81" evidence="1"/>
<dbReference type="EMBL" id="CP000494">
    <property type="protein sequence ID" value="ABQ38317.1"/>
    <property type="molecule type" value="Genomic_DNA"/>
</dbReference>
<dbReference type="RefSeq" id="WP_012046258.1">
    <property type="nucleotide sequence ID" value="NC_009485.1"/>
</dbReference>
<dbReference type="SMR" id="A5EQ73"/>
<dbReference type="STRING" id="288000.BBta_6407"/>
<dbReference type="KEGG" id="bbt:BBta_6407"/>
<dbReference type="eggNOG" id="COG1633">
    <property type="taxonomic scope" value="Bacteria"/>
</dbReference>
<dbReference type="HOGENOM" id="CLU_048037_0_0_5"/>
<dbReference type="OrthoDB" id="141643at2"/>
<dbReference type="UniPathway" id="UPA00671"/>
<dbReference type="Proteomes" id="UP000000246">
    <property type="component" value="Chromosome"/>
</dbReference>
<dbReference type="GO" id="GO:0005506">
    <property type="term" value="F:iron ion binding"/>
    <property type="evidence" value="ECO:0007669"/>
    <property type="project" value="UniProtKB-UniRule"/>
</dbReference>
<dbReference type="GO" id="GO:0048529">
    <property type="term" value="F:magnesium-protoporphyrin IX monomethyl ester (oxidative) cyclase activity"/>
    <property type="evidence" value="ECO:0007669"/>
    <property type="project" value="UniProtKB-UniRule"/>
</dbReference>
<dbReference type="GO" id="GO:0036070">
    <property type="term" value="P:light-independent bacteriochlorophyll biosynthetic process"/>
    <property type="evidence" value="ECO:0007669"/>
    <property type="project" value="UniProtKB-UniRule"/>
</dbReference>
<dbReference type="GO" id="GO:0015979">
    <property type="term" value="P:photosynthesis"/>
    <property type="evidence" value="ECO:0007669"/>
    <property type="project" value="UniProtKB-UniRule"/>
</dbReference>
<dbReference type="CDD" id="cd01047">
    <property type="entry name" value="ACSF"/>
    <property type="match status" value="1"/>
</dbReference>
<dbReference type="HAMAP" id="MF_01840">
    <property type="entry name" value="AcsF"/>
    <property type="match status" value="1"/>
</dbReference>
<dbReference type="InterPro" id="IPR008434">
    <property type="entry name" value="AcsF"/>
</dbReference>
<dbReference type="InterPro" id="IPR009078">
    <property type="entry name" value="Ferritin-like_SF"/>
</dbReference>
<dbReference type="InterPro" id="IPR003251">
    <property type="entry name" value="Rr_diiron-bd_dom"/>
</dbReference>
<dbReference type="NCBIfam" id="TIGR02029">
    <property type="entry name" value="AcsF"/>
    <property type="match status" value="1"/>
</dbReference>
<dbReference type="NCBIfam" id="NF010172">
    <property type="entry name" value="PRK13654.1"/>
    <property type="match status" value="1"/>
</dbReference>
<dbReference type="PANTHER" id="PTHR31053">
    <property type="entry name" value="MAGNESIUM-PROTOPORPHYRIN IX MONOMETHYL ESTER [OXIDATIVE] CYCLASE, CHLOROPLASTIC"/>
    <property type="match status" value="1"/>
</dbReference>
<dbReference type="PANTHER" id="PTHR31053:SF2">
    <property type="entry name" value="MAGNESIUM-PROTOPORPHYRIN IX MONOMETHYL ESTER [OXIDATIVE] CYCLASE, CHLOROPLASTIC"/>
    <property type="match status" value="1"/>
</dbReference>
<dbReference type="Pfam" id="PF02915">
    <property type="entry name" value="Rubrerythrin"/>
    <property type="match status" value="1"/>
</dbReference>
<dbReference type="SUPFAM" id="SSF47240">
    <property type="entry name" value="Ferritin-like"/>
    <property type="match status" value="1"/>
</dbReference>
<comment type="function">
    <text evidence="1">Catalyzes the formation of the isocyclic ring in chlorophyll biosynthesis. Mediates the cyclase reaction, which results in the formation of divinylprotochlorophyllide (Pchlide) characteristic of all chlorophylls from magnesium-protoporphyrin IX 13-monomethyl ester (MgPMME).</text>
</comment>
<comment type="catalytic activity">
    <reaction evidence="1">
        <text>Mg-protoporphyrin IX 13-monomethyl ester + 3 NADPH + 3 O2 + 2 H(+) = 3,8-divinyl protochlorophyllide a + 3 NADP(+) + 5 H2O</text>
        <dbReference type="Rhea" id="RHEA:33235"/>
        <dbReference type="ChEBI" id="CHEBI:15377"/>
        <dbReference type="ChEBI" id="CHEBI:15378"/>
        <dbReference type="ChEBI" id="CHEBI:15379"/>
        <dbReference type="ChEBI" id="CHEBI:57783"/>
        <dbReference type="ChEBI" id="CHEBI:58349"/>
        <dbReference type="ChEBI" id="CHEBI:58632"/>
        <dbReference type="ChEBI" id="CHEBI:60491"/>
        <dbReference type="EC" id="1.14.13.81"/>
    </reaction>
</comment>
<comment type="cofactor">
    <cofactor evidence="1">
        <name>Fe cation</name>
        <dbReference type="ChEBI" id="CHEBI:24875"/>
    </cofactor>
</comment>
<comment type="pathway">
    <text evidence="1">Porphyrin-containing compound metabolism; bacteriochlorophyll biosynthesis (light-independent).</text>
</comment>
<comment type="similarity">
    <text evidence="1">Belongs to the AcsF family.</text>
</comment>
<name>ACSF_BRASB</name>